<dbReference type="EMBL" id="CU329670">
    <property type="protein sequence ID" value="CAB60233.2"/>
    <property type="molecule type" value="Genomic_DNA"/>
</dbReference>
<dbReference type="EMBL" id="AB027946">
    <property type="protein sequence ID" value="BAA87250.1"/>
    <property type="molecule type" value="Genomic_DNA"/>
</dbReference>
<dbReference type="RefSeq" id="NP_594850.2">
    <property type="nucleotide sequence ID" value="NM_001020279.2"/>
</dbReference>
<dbReference type="PDB" id="7Q72">
    <property type="method" value="X-ray"/>
    <property type="resolution" value="2.80 A"/>
    <property type="chains" value="C/D=288-345"/>
</dbReference>
<dbReference type="PDB" id="7QUU">
    <property type="method" value="NMR"/>
    <property type="chains" value="B=192-235"/>
</dbReference>
<dbReference type="PDB" id="7QY5">
    <property type="method" value="X-ray"/>
    <property type="resolution" value="2.77 A"/>
    <property type="chains" value="F/G=20-40"/>
</dbReference>
<dbReference type="PDBsum" id="7Q72"/>
<dbReference type="PDBsum" id="7QUU"/>
<dbReference type="PDBsum" id="7QY5"/>
<dbReference type="SASBDB" id="Q9UTR8"/>
<dbReference type="SMR" id="Q9UTR8"/>
<dbReference type="BioGRID" id="279682">
    <property type="interactions" value="256"/>
</dbReference>
<dbReference type="DIP" id="DIP-36608N"/>
<dbReference type="FunCoup" id="Q9UTR8">
    <property type="interactions" value="22"/>
</dbReference>
<dbReference type="IntAct" id="Q9UTR8">
    <property type="interactions" value="24"/>
</dbReference>
<dbReference type="MINT" id="Q9UTR8"/>
<dbReference type="STRING" id="284812.Q9UTR8"/>
<dbReference type="iPTMnet" id="Q9UTR8"/>
<dbReference type="PaxDb" id="4896-SPAC1006.03c.1"/>
<dbReference type="EnsemblFungi" id="SPAC1006.03c.1">
    <property type="protein sequence ID" value="SPAC1006.03c.1:pep"/>
    <property type="gene ID" value="SPAC1006.03c"/>
</dbReference>
<dbReference type="GeneID" id="2543254"/>
<dbReference type="KEGG" id="spo:2543254"/>
<dbReference type="PomBase" id="SPAC1006.03c">
    <property type="gene designation" value="red1"/>
</dbReference>
<dbReference type="VEuPathDB" id="FungiDB:SPAC1006.03c"/>
<dbReference type="eggNOG" id="KOG4839">
    <property type="taxonomic scope" value="Eukaryota"/>
</dbReference>
<dbReference type="HOGENOM" id="CLU_393872_0_0_1"/>
<dbReference type="InParanoid" id="Q9UTR8"/>
<dbReference type="OMA" id="CKYETTG"/>
<dbReference type="PRO" id="PR:Q9UTR8"/>
<dbReference type="Proteomes" id="UP000002485">
    <property type="component" value="Chromosome I"/>
</dbReference>
<dbReference type="GO" id="GO:0000785">
    <property type="term" value="C:chromatin"/>
    <property type="evidence" value="ECO:0000314"/>
    <property type="project" value="PomBase"/>
</dbReference>
<dbReference type="GO" id="GO:0071920">
    <property type="term" value="C:cleavage body"/>
    <property type="evidence" value="ECO:0000314"/>
    <property type="project" value="PomBase"/>
</dbReference>
<dbReference type="GO" id="GO:1990342">
    <property type="term" value="C:heterochromatin island"/>
    <property type="evidence" value="ECO:0000314"/>
    <property type="project" value="PomBase"/>
</dbReference>
<dbReference type="GO" id="GO:0033620">
    <property type="term" value="C:Mei2 nuclear dot complex"/>
    <property type="evidence" value="ECO:0000314"/>
    <property type="project" value="PomBase"/>
</dbReference>
<dbReference type="GO" id="GO:1990477">
    <property type="term" value="C:MTREC complex"/>
    <property type="evidence" value="ECO:0000314"/>
    <property type="project" value="PomBase"/>
</dbReference>
<dbReference type="GO" id="GO:0016604">
    <property type="term" value="C:nuclear body"/>
    <property type="evidence" value="ECO:0000314"/>
    <property type="project" value="PomBase"/>
</dbReference>
<dbReference type="GO" id="GO:1990251">
    <property type="term" value="C:nuclear exosome focus"/>
    <property type="evidence" value="ECO:0000314"/>
    <property type="project" value="PomBase"/>
</dbReference>
<dbReference type="GO" id="GO:0140602">
    <property type="term" value="C:nucleolar peripheral inclusion body"/>
    <property type="evidence" value="ECO:0000314"/>
    <property type="project" value="PomBase"/>
</dbReference>
<dbReference type="GO" id="GO:0005634">
    <property type="term" value="C:nucleus"/>
    <property type="evidence" value="ECO:0000314"/>
    <property type="project" value="CACAO"/>
</dbReference>
<dbReference type="GO" id="GO:0030674">
    <property type="term" value="F:protein-macromolecule adaptor activity"/>
    <property type="evidence" value="ECO:0000353"/>
    <property type="project" value="PomBase"/>
</dbReference>
<dbReference type="GO" id="GO:0008270">
    <property type="term" value="F:zinc ion binding"/>
    <property type="evidence" value="ECO:0007669"/>
    <property type="project" value="UniProtKB-KW"/>
</dbReference>
<dbReference type="GO" id="GO:0033621">
    <property type="term" value="P:nuclear mRNA surveillance of meiosis-specific transcripts"/>
    <property type="evidence" value="ECO:0000315"/>
    <property type="project" value="PomBase"/>
</dbReference>
<dbReference type="GO" id="GO:0071030">
    <property type="term" value="P:nuclear mRNA surveillance of spliceosomal pre-mRNA splicing"/>
    <property type="evidence" value="ECO:0000315"/>
    <property type="project" value="PomBase"/>
</dbReference>
<dbReference type="GO" id="GO:0031047">
    <property type="term" value="P:regulatory ncRNA-mediated gene silencing"/>
    <property type="evidence" value="ECO:0000269"/>
    <property type="project" value="PomBase"/>
</dbReference>
<dbReference type="GO" id="GO:1902794">
    <property type="term" value="P:siRNA-independent facultative heterochromatin formation"/>
    <property type="evidence" value="ECO:0000315"/>
    <property type="project" value="PomBase"/>
</dbReference>
<dbReference type="GO" id="GO:0043144">
    <property type="term" value="P:sno(s)RNA processing"/>
    <property type="evidence" value="ECO:0000315"/>
    <property type="project" value="PomBase"/>
</dbReference>
<dbReference type="InterPro" id="IPR019607">
    <property type="entry name" value="Putative_zinc-finger_domain"/>
</dbReference>
<dbReference type="InterPro" id="IPR039278">
    <property type="entry name" value="Red1"/>
</dbReference>
<dbReference type="PANTHER" id="PTHR21563">
    <property type="entry name" value="ZINC FINGER C3H1 DOMAIN-CONTAINING PROTEIN"/>
    <property type="match status" value="1"/>
</dbReference>
<dbReference type="PANTHER" id="PTHR21563:SF3">
    <property type="entry name" value="ZINC FINGER C3H1 DOMAIN-CONTAINING PROTEIN"/>
    <property type="match status" value="1"/>
</dbReference>
<dbReference type="Pfam" id="PF10650">
    <property type="entry name" value="zf-C3H1"/>
    <property type="match status" value="1"/>
</dbReference>
<accession>Q9UTR8</accession>
<accession>Q9UTX3</accession>
<gene>
    <name evidence="8" type="primary">red1</name>
    <name evidence="8" type="synonym">iss3</name>
    <name evidence="8" type="ORF">SPAC1006.03c</name>
</gene>
<evidence type="ECO:0000255" key="1"/>
<evidence type="ECO:0000256" key="2">
    <source>
        <dbReference type="SAM" id="MobiDB-lite"/>
    </source>
</evidence>
<evidence type="ECO:0000269" key="3">
    <source>
    </source>
</evidence>
<evidence type="ECO:0000269" key="4">
    <source>
    </source>
</evidence>
<evidence type="ECO:0000269" key="5">
    <source>
    </source>
</evidence>
<evidence type="ECO:0000269" key="6">
    <source>
    </source>
</evidence>
<evidence type="ECO:0000305" key="7"/>
<evidence type="ECO:0000312" key="8">
    <source>
        <dbReference type="PomBase" id="SPAC1006.03c"/>
    </source>
</evidence>
<evidence type="ECO:0007829" key="9">
    <source>
        <dbReference type="PDB" id="7Q72"/>
    </source>
</evidence>
<evidence type="ECO:0007829" key="10">
    <source>
        <dbReference type="PDB" id="7QUU"/>
    </source>
</evidence>
<keyword id="KW-0002">3D-structure</keyword>
<keyword id="KW-0175">Coiled coil</keyword>
<keyword id="KW-0479">Metal-binding</keyword>
<keyword id="KW-0539">Nucleus</keyword>
<keyword id="KW-1185">Reference proteome</keyword>
<keyword id="KW-0862">Zinc</keyword>
<keyword id="KW-0863">Zinc-finger</keyword>
<proteinExistence type="evidence at protein level"/>
<comment type="function">
    <text evidence="5 6">Promotes the exosome-mediated degradation of mRNAs containing a DSR (determinant of selective removal) signal sequence from mitotic cells.</text>
</comment>
<comment type="subunit">
    <text evidence="5">Interacts with mmi1, pla1 and rrp6.</text>
</comment>
<comment type="interaction">
    <interactant intactId="EBI-1117407">
        <id>Q9UTR8</id>
    </interactant>
    <interactant intactId="EBI-7997069">
        <id>O74958</id>
        <label>mmi1</label>
    </interactant>
    <organismsDiffer>false</organismsDiffer>
    <experiments>5</experiments>
</comment>
<comment type="interaction">
    <interactant intactId="EBI-1117407">
        <id>Q9UTR8</id>
    </interactant>
    <interactant intactId="EBI-7997221">
        <id>Q10295</id>
        <label>pla1</label>
    </interactant>
    <organismsDiffer>false</organismsDiffer>
    <experiments>3</experiments>
</comment>
<comment type="interaction">
    <interactant intactId="EBI-1117407">
        <id>Q9UTR8</id>
    </interactant>
    <interactant intactId="EBI-8993901">
        <id>O13799</id>
        <label>SPAC17H9.02</label>
    </interactant>
    <organismsDiffer>false</organismsDiffer>
    <experiments>4</experiments>
</comment>
<comment type="interaction">
    <interactant intactId="EBI-1117407">
        <id>Q9UTR8</id>
    </interactant>
    <interactant intactId="EBI-8993923">
        <id>O14269</id>
        <label>SPAC7D4.14c</label>
    </interactant>
    <organismsDiffer>false</organismsDiffer>
    <experiments>3</experiments>
</comment>
<comment type="interaction">
    <interactant intactId="EBI-1117407">
        <id>Q9UTR8</id>
    </interactant>
    <interactant intactId="EBI-8993741">
        <id>Q9USP9</id>
        <label>SPBC902.04</label>
    </interactant>
    <organismsDiffer>false</organismsDiffer>
    <experiments>3</experiments>
</comment>
<comment type="subcellular location">
    <subcellularLocation>
        <location evidence="3 4 5">Nucleus</location>
    </subcellularLocation>
    <text>Localizes to distinct foci in the nucleus in mitotic cells, which disassemble during meiosis, although the protein is still present.</text>
</comment>
<comment type="disruption phenotype">
    <text evidence="6">Cold sensitive (PubMed:26942678). Decreases degradation of mRNA containing a DSR (determinant of selective removal) region (PubMed:26942678). Abnormal meiRNA nuclear dot formation in zygote (PubMed:26942678). meiRNA dot formation in haploid cells (PubMed:26942678).</text>
</comment>
<protein>
    <recommendedName>
        <fullName evidence="7">NURS complex subunit red1</fullName>
    </recommendedName>
</protein>
<organism>
    <name type="scientific">Schizosaccharomyces pombe (strain 972 / ATCC 24843)</name>
    <name type="common">Fission yeast</name>
    <dbReference type="NCBI Taxonomy" id="284812"/>
    <lineage>
        <taxon>Eukaryota</taxon>
        <taxon>Fungi</taxon>
        <taxon>Dikarya</taxon>
        <taxon>Ascomycota</taxon>
        <taxon>Taphrinomycotina</taxon>
        <taxon>Schizosaccharomycetes</taxon>
        <taxon>Schizosaccharomycetales</taxon>
        <taxon>Schizosaccharomycetaceae</taxon>
        <taxon>Schizosaccharomyces</taxon>
    </lineage>
</organism>
<reference key="1">
    <citation type="journal article" date="2002" name="Nature">
        <title>The genome sequence of Schizosaccharomyces pombe.</title>
        <authorList>
            <person name="Wood V."/>
            <person name="Gwilliam R."/>
            <person name="Rajandream M.A."/>
            <person name="Lyne M.H."/>
            <person name="Lyne R."/>
            <person name="Stewart A."/>
            <person name="Sgouros J.G."/>
            <person name="Peat N."/>
            <person name="Hayles J."/>
            <person name="Baker S.G."/>
            <person name="Basham D."/>
            <person name="Bowman S."/>
            <person name="Brooks K."/>
            <person name="Brown D."/>
            <person name="Brown S."/>
            <person name="Chillingworth T."/>
            <person name="Churcher C.M."/>
            <person name="Collins M."/>
            <person name="Connor R."/>
            <person name="Cronin A."/>
            <person name="Davis P."/>
            <person name="Feltwell T."/>
            <person name="Fraser A."/>
            <person name="Gentles S."/>
            <person name="Goble A."/>
            <person name="Hamlin N."/>
            <person name="Harris D.E."/>
            <person name="Hidalgo J."/>
            <person name="Hodgson G."/>
            <person name="Holroyd S."/>
            <person name="Hornsby T."/>
            <person name="Howarth S."/>
            <person name="Huckle E.J."/>
            <person name="Hunt S."/>
            <person name="Jagels K."/>
            <person name="James K.D."/>
            <person name="Jones L."/>
            <person name="Jones M."/>
            <person name="Leather S."/>
            <person name="McDonald S."/>
            <person name="McLean J."/>
            <person name="Mooney P."/>
            <person name="Moule S."/>
            <person name="Mungall K.L."/>
            <person name="Murphy L.D."/>
            <person name="Niblett D."/>
            <person name="Odell C."/>
            <person name="Oliver K."/>
            <person name="O'Neil S."/>
            <person name="Pearson D."/>
            <person name="Quail M.A."/>
            <person name="Rabbinowitsch E."/>
            <person name="Rutherford K.M."/>
            <person name="Rutter S."/>
            <person name="Saunders D."/>
            <person name="Seeger K."/>
            <person name="Sharp S."/>
            <person name="Skelton J."/>
            <person name="Simmonds M.N."/>
            <person name="Squares R."/>
            <person name="Squares S."/>
            <person name="Stevens K."/>
            <person name="Taylor K."/>
            <person name="Taylor R.G."/>
            <person name="Tivey A."/>
            <person name="Walsh S.V."/>
            <person name="Warren T."/>
            <person name="Whitehead S."/>
            <person name="Woodward J.R."/>
            <person name="Volckaert G."/>
            <person name="Aert R."/>
            <person name="Robben J."/>
            <person name="Grymonprez B."/>
            <person name="Weltjens I."/>
            <person name="Vanstreels E."/>
            <person name="Rieger M."/>
            <person name="Schaefer M."/>
            <person name="Mueller-Auer S."/>
            <person name="Gabel C."/>
            <person name="Fuchs M."/>
            <person name="Duesterhoeft A."/>
            <person name="Fritzc C."/>
            <person name="Holzer E."/>
            <person name="Moestl D."/>
            <person name="Hilbert H."/>
            <person name="Borzym K."/>
            <person name="Langer I."/>
            <person name="Beck A."/>
            <person name="Lehrach H."/>
            <person name="Reinhardt R."/>
            <person name="Pohl T.M."/>
            <person name="Eger P."/>
            <person name="Zimmermann W."/>
            <person name="Wedler H."/>
            <person name="Wambutt R."/>
            <person name="Purnelle B."/>
            <person name="Goffeau A."/>
            <person name="Cadieu E."/>
            <person name="Dreano S."/>
            <person name="Gloux S."/>
            <person name="Lelaure V."/>
            <person name="Mottier S."/>
            <person name="Galibert F."/>
            <person name="Aves S.J."/>
            <person name="Xiang Z."/>
            <person name="Hunt C."/>
            <person name="Moore K."/>
            <person name="Hurst S.M."/>
            <person name="Lucas M."/>
            <person name="Rochet M."/>
            <person name="Gaillardin C."/>
            <person name="Tallada V.A."/>
            <person name="Garzon A."/>
            <person name="Thode G."/>
            <person name="Daga R.R."/>
            <person name="Cruzado L."/>
            <person name="Jimenez J."/>
            <person name="Sanchez M."/>
            <person name="del Rey F."/>
            <person name="Benito J."/>
            <person name="Dominguez A."/>
            <person name="Revuelta J.L."/>
            <person name="Moreno S."/>
            <person name="Armstrong J."/>
            <person name="Forsburg S.L."/>
            <person name="Cerutti L."/>
            <person name="Lowe T."/>
            <person name="McCombie W.R."/>
            <person name="Paulsen I."/>
            <person name="Potashkin J."/>
            <person name="Shpakovski G.V."/>
            <person name="Ussery D."/>
            <person name="Barrell B.G."/>
            <person name="Nurse P."/>
        </authorList>
    </citation>
    <scope>NUCLEOTIDE SEQUENCE [LARGE SCALE GENOMIC DNA]</scope>
    <source>
        <strain>972 / ATCC 24843</strain>
    </source>
</reference>
<reference key="2">
    <citation type="journal article" date="2000" name="Genes Cells">
        <title>Large-scale screening of intracellular protein localization in living fission yeast cells by the use of a GFP-fusion genomic DNA library.</title>
        <authorList>
            <person name="Ding D.-Q."/>
            <person name="Tomita Y."/>
            <person name="Yamamoto A."/>
            <person name="Chikashige Y."/>
            <person name="Haraguchi T."/>
            <person name="Hiraoka Y."/>
        </authorList>
    </citation>
    <scope>NUCLEOTIDE SEQUENCE [LARGE SCALE GENOMIC DNA] OF 238-416</scope>
    <scope>SUBCELLULAR LOCATION</scope>
    <source>
        <strain>ATCC 38364 / 968</strain>
    </source>
</reference>
<reference key="3">
    <citation type="journal article" date="2006" name="Nat. Biotechnol.">
        <title>ORFeome cloning and global analysis of protein localization in the fission yeast Schizosaccharomyces pombe.</title>
        <authorList>
            <person name="Matsuyama A."/>
            <person name="Arai R."/>
            <person name="Yashiroda Y."/>
            <person name="Shirai A."/>
            <person name="Kamata A."/>
            <person name="Sekido S."/>
            <person name="Kobayashi Y."/>
            <person name="Hashimoto A."/>
            <person name="Hamamoto M."/>
            <person name="Hiraoka Y."/>
            <person name="Horinouchi S."/>
            <person name="Yoshida M."/>
        </authorList>
    </citation>
    <scope>SUBCELLULAR LOCATION [LARGE SCALE ANALYSIS]</scope>
</reference>
<reference key="4">
    <citation type="journal article" date="2011" name="EMBO J.">
        <title>Red1 promotes the elimination of meiosis-specific mRNAs in vegetatively growing fission yeast.</title>
        <authorList>
            <person name="Sugiyama T."/>
            <person name="Sugioka-Sugiyama R."/>
        </authorList>
    </citation>
    <scope>FUNCTION</scope>
    <scope>REVISION OF GENE MODEL</scope>
    <scope>INTERACTION WITH MMI1; PLA1 AND RRP6</scope>
    <scope>SUBCELLULAR LOCATION</scope>
    <scope>MUTAGENESIS OF HIS-637</scope>
</reference>
<reference key="5">
    <citation type="journal article" date="2016" name="Mol. Cell">
        <title>Enhancer of Rudimentary Cooperates with Conserved RNA-Processing Factors to Promote Meiotic mRNA Decay and Facultative Heterochromatin Assembly.</title>
        <authorList>
            <person name="Sugiyama T."/>
            <person name="Thillainadesan G."/>
            <person name="Chalamcharla V.R."/>
            <person name="Meng Z."/>
            <person name="Balachandran V."/>
            <person name="Dhakshnamoorthy J."/>
            <person name="Zhou M."/>
            <person name="Grewal S.I.S."/>
        </authorList>
    </citation>
    <scope>FUNCTION</scope>
    <scope>DISRUPTION PHENOTYPE</scope>
</reference>
<sequence length="712" mass="79489">MSRSINLDELRKKALESKKKNEEDESNDSDKEDGEISEDDPVIDQSNSVPPMKVPTFPEQIPQLPPFDRFPGTNANFFPFGAPFMLPPALMFGPNTVPFFPQTASSNKTFSKRKRSSENSFNNRNKAKSSETSDSSNTSQSFKENRALKDTATSRPLALSSDTSYQKSEKAKSEKSPFLSTSKNSDANYSKTTNQKEAEKAVSQLFEVGVRFNDFIAEGIEPSVVHTLFLKLGLDSSSASSQGSLTLSADKAARSAKLRKIDSNLSDTHILPGDNGTPTVLPERKNLISLPLLKQDDWLSSSKPFGSSTPNVVIEFDSDDDGDDFSNSKIEQSNLEKPPSNSENGLTMSRSDYLALLRNKEEEIRRMTKLILRLESNKKPYRSPTSAADMKLPSVPVAAVDNKSKTHLDTFEKVVDLSSKADFVEAGPSISSSGASSSAATTNSDTTEQILEAPWLRKTEQIAVVHEEHPAQIKKSEIDILNNLIEKEEGELTKYQTLVKSKTEILTQLYTRKKQLLEQQGKGNVACLPKESDLSMDSITEVSAQADENSSQILSSKTSNAPNGTTETDFEDKVPLVDYISPFYRFKSYRFNQQFVERVPLKYRSLTYSNKIEPMKVFCKYETTGGVCNDDHCEASHFRDIKMTDDEIIQDLSRYIEGNDEIEKESYKSGLDIVMKNTDENTDFVDVATRIVEYHNLWKSERMTIPVAKVSI</sequence>
<name>RED1_SCHPO</name>
<feature type="chain" id="PRO_0000362152" description="NURS complex subunit red1">
    <location>
        <begin position="1"/>
        <end position="712"/>
    </location>
</feature>
<feature type="zinc finger region" description="C3H1-type">
    <location>
        <begin position="618"/>
        <end position="639"/>
    </location>
</feature>
<feature type="region of interest" description="Disordered" evidence="2">
    <location>
        <begin position="1"/>
        <end position="71"/>
    </location>
</feature>
<feature type="region of interest" description="Disordered" evidence="2">
    <location>
        <begin position="107"/>
        <end position="195"/>
    </location>
</feature>
<feature type="region of interest" description="Disordered" evidence="2">
    <location>
        <begin position="323"/>
        <end position="348"/>
    </location>
</feature>
<feature type="region of interest" description="Disordered" evidence="2">
    <location>
        <begin position="428"/>
        <end position="447"/>
    </location>
</feature>
<feature type="region of interest" description="Disordered" evidence="2">
    <location>
        <begin position="545"/>
        <end position="568"/>
    </location>
</feature>
<feature type="coiled-coil region" evidence="1">
    <location>
        <begin position="5"/>
        <end position="32"/>
    </location>
</feature>
<feature type="coiled-coil region" evidence="1">
    <location>
        <begin position="351"/>
        <end position="379"/>
    </location>
</feature>
<feature type="coiled-coil region" evidence="1">
    <location>
        <begin position="471"/>
        <end position="501"/>
    </location>
</feature>
<feature type="compositionally biased region" description="Basic and acidic residues" evidence="2">
    <location>
        <begin position="1"/>
        <end position="22"/>
    </location>
</feature>
<feature type="compositionally biased region" description="Acidic residues" evidence="2">
    <location>
        <begin position="23"/>
        <end position="42"/>
    </location>
</feature>
<feature type="compositionally biased region" description="Low complexity" evidence="2">
    <location>
        <begin position="130"/>
        <end position="141"/>
    </location>
</feature>
<feature type="compositionally biased region" description="Polar residues" evidence="2">
    <location>
        <begin position="178"/>
        <end position="193"/>
    </location>
</feature>
<feature type="compositionally biased region" description="Polar residues" evidence="2">
    <location>
        <begin position="327"/>
        <end position="348"/>
    </location>
</feature>
<feature type="compositionally biased region" description="Polar residues" evidence="2">
    <location>
        <begin position="545"/>
        <end position="567"/>
    </location>
</feature>
<feature type="mutagenesis site" description="Reduces the mRNA elimination activity of the protein, but has no impact on localization." evidence="5">
    <original>H</original>
    <variation>I</variation>
    <location>
        <position position="637"/>
    </location>
</feature>
<feature type="helix" evidence="10">
    <location>
        <begin position="194"/>
        <end position="208"/>
    </location>
</feature>
<feature type="helix" evidence="10">
    <location>
        <begin position="212"/>
        <end position="217"/>
    </location>
</feature>
<feature type="helix" evidence="10">
    <location>
        <begin position="222"/>
        <end position="231"/>
    </location>
</feature>
<feature type="helix" evidence="9">
    <location>
        <begin position="290"/>
        <end position="299"/>
    </location>
</feature>
<feature type="strand" evidence="9">
    <location>
        <begin position="312"/>
        <end position="314"/>
    </location>
</feature>
<feature type="strand" evidence="9">
    <location>
        <begin position="317"/>
        <end position="320"/>
    </location>
</feature>